<gene>
    <name evidence="1" type="primary">rpsH</name>
    <name type="ordered locus">TRQ2_1380</name>
</gene>
<accession>B1LBM6</accession>
<comment type="function">
    <text evidence="1">One of the primary rRNA binding proteins, it binds directly to 16S rRNA central domain where it helps coordinate assembly of the platform of the 30S subunit.</text>
</comment>
<comment type="subunit">
    <text evidence="1">Part of the 30S ribosomal subunit. Contacts proteins S5 and S12.</text>
</comment>
<comment type="similarity">
    <text evidence="1">Belongs to the universal ribosomal protein uS8 family.</text>
</comment>
<keyword id="KW-0687">Ribonucleoprotein</keyword>
<keyword id="KW-0689">Ribosomal protein</keyword>
<keyword id="KW-0694">RNA-binding</keyword>
<keyword id="KW-0699">rRNA-binding</keyword>
<organism>
    <name type="scientific">Thermotoga sp. (strain RQ2)</name>
    <dbReference type="NCBI Taxonomy" id="126740"/>
    <lineage>
        <taxon>Bacteria</taxon>
        <taxon>Thermotogati</taxon>
        <taxon>Thermotogota</taxon>
        <taxon>Thermotogae</taxon>
        <taxon>Thermotogales</taxon>
        <taxon>Thermotogaceae</taxon>
        <taxon>Thermotoga</taxon>
    </lineage>
</organism>
<proteinExistence type="inferred from homology"/>
<protein>
    <recommendedName>
        <fullName evidence="1">Small ribosomal subunit protein uS8</fullName>
    </recommendedName>
    <alternativeName>
        <fullName evidence="2">30S ribosomal protein S8</fullName>
    </alternativeName>
</protein>
<name>RS8_THESQ</name>
<dbReference type="EMBL" id="CP000969">
    <property type="protein sequence ID" value="ACB09724.1"/>
    <property type="molecule type" value="Genomic_DNA"/>
</dbReference>
<dbReference type="RefSeq" id="WP_008195021.1">
    <property type="nucleotide sequence ID" value="NC_010483.1"/>
</dbReference>
<dbReference type="SMR" id="B1LBM6"/>
<dbReference type="KEGG" id="trq:TRQ2_1380"/>
<dbReference type="HOGENOM" id="CLU_098428_0_2_0"/>
<dbReference type="Proteomes" id="UP000001687">
    <property type="component" value="Chromosome"/>
</dbReference>
<dbReference type="GO" id="GO:1990904">
    <property type="term" value="C:ribonucleoprotein complex"/>
    <property type="evidence" value="ECO:0007669"/>
    <property type="project" value="UniProtKB-KW"/>
</dbReference>
<dbReference type="GO" id="GO:0005840">
    <property type="term" value="C:ribosome"/>
    <property type="evidence" value="ECO:0007669"/>
    <property type="project" value="UniProtKB-KW"/>
</dbReference>
<dbReference type="GO" id="GO:0019843">
    <property type="term" value="F:rRNA binding"/>
    <property type="evidence" value="ECO:0007669"/>
    <property type="project" value="UniProtKB-UniRule"/>
</dbReference>
<dbReference type="GO" id="GO:0003735">
    <property type="term" value="F:structural constituent of ribosome"/>
    <property type="evidence" value="ECO:0007669"/>
    <property type="project" value="InterPro"/>
</dbReference>
<dbReference type="GO" id="GO:0006412">
    <property type="term" value="P:translation"/>
    <property type="evidence" value="ECO:0007669"/>
    <property type="project" value="UniProtKB-UniRule"/>
</dbReference>
<dbReference type="FunFam" id="3.30.1370.30:FF:000002">
    <property type="entry name" value="30S ribosomal protein S8"/>
    <property type="match status" value="1"/>
</dbReference>
<dbReference type="FunFam" id="3.30.1490.10:FF:000001">
    <property type="entry name" value="30S ribosomal protein S8"/>
    <property type="match status" value="1"/>
</dbReference>
<dbReference type="Gene3D" id="3.30.1370.30">
    <property type="match status" value="1"/>
</dbReference>
<dbReference type="Gene3D" id="3.30.1490.10">
    <property type="match status" value="1"/>
</dbReference>
<dbReference type="HAMAP" id="MF_01302_B">
    <property type="entry name" value="Ribosomal_uS8_B"/>
    <property type="match status" value="1"/>
</dbReference>
<dbReference type="InterPro" id="IPR000630">
    <property type="entry name" value="Ribosomal_uS8"/>
</dbReference>
<dbReference type="InterPro" id="IPR047863">
    <property type="entry name" value="Ribosomal_uS8_CS"/>
</dbReference>
<dbReference type="InterPro" id="IPR035987">
    <property type="entry name" value="Ribosomal_uS8_sf"/>
</dbReference>
<dbReference type="NCBIfam" id="NF001109">
    <property type="entry name" value="PRK00136.1"/>
    <property type="match status" value="1"/>
</dbReference>
<dbReference type="PANTHER" id="PTHR11758">
    <property type="entry name" value="40S RIBOSOMAL PROTEIN S15A"/>
    <property type="match status" value="1"/>
</dbReference>
<dbReference type="Pfam" id="PF00410">
    <property type="entry name" value="Ribosomal_S8"/>
    <property type="match status" value="1"/>
</dbReference>
<dbReference type="SUPFAM" id="SSF56047">
    <property type="entry name" value="Ribosomal protein S8"/>
    <property type="match status" value="1"/>
</dbReference>
<dbReference type="PROSITE" id="PS00053">
    <property type="entry name" value="RIBOSOMAL_S8"/>
    <property type="match status" value="1"/>
</dbReference>
<feature type="chain" id="PRO_1000140630" description="Small ribosomal subunit protein uS8">
    <location>
        <begin position="1"/>
        <end position="134"/>
    </location>
</feature>
<reference key="1">
    <citation type="journal article" date="2011" name="J. Bacteriol.">
        <title>Genome sequence of Thermotoga sp. strain RQ2, a hyperthermophilic bacterium isolated from a geothermally heated region of the seafloor near Ribeira Quente, the Azores.</title>
        <authorList>
            <person name="Swithers K.S."/>
            <person name="DiPippo J.L."/>
            <person name="Bruce D.C."/>
            <person name="Detter C."/>
            <person name="Tapia R."/>
            <person name="Han S."/>
            <person name="Saunders E."/>
            <person name="Goodwin L.A."/>
            <person name="Han J."/>
            <person name="Woyke T."/>
            <person name="Pitluck S."/>
            <person name="Pennacchio L."/>
            <person name="Nolan M."/>
            <person name="Mikhailova N."/>
            <person name="Lykidis A."/>
            <person name="Land M.L."/>
            <person name="Brettin T."/>
            <person name="Stetter K.O."/>
            <person name="Nelson K.E."/>
            <person name="Gogarten J.P."/>
            <person name="Noll K.M."/>
        </authorList>
    </citation>
    <scope>NUCLEOTIDE SEQUENCE [LARGE SCALE GENOMIC DNA]</scope>
    <source>
        <strain>RQ2</strain>
    </source>
</reference>
<evidence type="ECO:0000255" key="1">
    <source>
        <dbReference type="HAMAP-Rule" id="MF_01302"/>
    </source>
</evidence>
<evidence type="ECO:0000305" key="2"/>
<sequence length="134" mass="15305">MWSDPIADMLTRIRNANMVFKEYTDIPASNLKKKICEILKREGFIADYKYIEDGKQGILRVYLKYKGGRKNRERVIHGIVRVSHSGRRIYVDKDHIPKVKNGLGIAILTTSKGVLTDKEARQLGVGGEVIAYVW</sequence>